<feature type="chain" id="PRO_0000270472" description="Arabinose import ATP-binding protein AraG">
    <location>
        <begin position="1"/>
        <end position="507"/>
    </location>
</feature>
<feature type="domain" description="ABC transporter 1" evidence="1">
    <location>
        <begin position="14"/>
        <end position="249"/>
    </location>
</feature>
<feature type="domain" description="ABC transporter 2" evidence="1">
    <location>
        <begin position="249"/>
        <end position="505"/>
    </location>
</feature>
<feature type="binding site" evidence="1">
    <location>
        <begin position="46"/>
        <end position="53"/>
    </location>
    <ligand>
        <name>ATP</name>
        <dbReference type="ChEBI" id="CHEBI:30616"/>
    </ligand>
</feature>
<keyword id="KW-0067">ATP-binding</keyword>
<keyword id="KW-0997">Cell inner membrane</keyword>
<keyword id="KW-1003">Cell membrane</keyword>
<keyword id="KW-0472">Membrane</keyword>
<keyword id="KW-0547">Nucleotide-binding</keyword>
<keyword id="KW-0677">Repeat</keyword>
<keyword id="KW-0762">Sugar transport</keyword>
<keyword id="KW-1278">Translocase</keyword>
<keyword id="KW-0813">Transport</keyword>
<evidence type="ECO:0000255" key="1">
    <source>
        <dbReference type="HAMAP-Rule" id="MF_01721"/>
    </source>
</evidence>
<organism>
    <name type="scientific">Pseudomonas syringae pv. syringae (strain B728a)</name>
    <dbReference type="NCBI Taxonomy" id="205918"/>
    <lineage>
        <taxon>Bacteria</taxon>
        <taxon>Pseudomonadati</taxon>
        <taxon>Pseudomonadota</taxon>
        <taxon>Gammaproteobacteria</taxon>
        <taxon>Pseudomonadales</taxon>
        <taxon>Pseudomonadaceae</taxon>
        <taxon>Pseudomonas</taxon>
        <taxon>Pseudomonas syringae</taxon>
    </lineage>
</organism>
<comment type="function">
    <text evidence="1">Part of the ABC transporter complex AraFGH involved in arabinose import. Responsible for energy coupling to the transport system.</text>
</comment>
<comment type="catalytic activity">
    <reaction evidence="1">
        <text>L-arabinose(out) + ATP + H2O = L-arabinose(in) + ADP + phosphate + H(+)</text>
        <dbReference type="Rhea" id="RHEA:30007"/>
        <dbReference type="ChEBI" id="CHEBI:15377"/>
        <dbReference type="ChEBI" id="CHEBI:15378"/>
        <dbReference type="ChEBI" id="CHEBI:17535"/>
        <dbReference type="ChEBI" id="CHEBI:30616"/>
        <dbReference type="ChEBI" id="CHEBI:43474"/>
        <dbReference type="ChEBI" id="CHEBI:456216"/>
        <dbReference type="EC" id="7.5.2.12"/>
    </reaction>
</comment>
<comment type="subunit">
    <text evidence="1">The complex is composed of two ATP-binding proteins (AraG), two transmembrane proteins (AraH) and a solute-binding protein (AraF).</text>
</comment>
<comment type="subcellular location">
    <subcellularLocation>
        <location evidence="1">Cell inner membrane</location>
        <topology evidence="1">Peripheral membrane protein</topology>
    </subcellularLocation>
</comment>
<comment type="similarity">
    <text evidence="1">Belongs to the ABC transporter superfamily. Arabinose importer (TC 3.A.1.2.2) family.</text>
</comment>
<gene>
    <name evidence="1" type="primary">araG</name>
    <name type="ordered locus">Psyr_2372</name>
</gene>
<reference key="1">
    <citation type="journal article" date="2005" name="Proc. Natl. Acad. Sci. U.S.A.">
        <title>Comparison of the complete genome sequences of Pseudomonas syringae pv. syringae B728a and pv. tomato DC3000.</title>
        <authorList>
            <person name="Feil H."/>
            <person name="Feil W.S."/>
            <person name="Chain P."/>
            <person name="Larimer F."/>
            <person name="Dibartolo G."/>
            <person name="Copeland A."/>
            <person name="Lykidis A."/>
            <person name="Trong S."/>
            <person name="Nolan M."/>
            <person name="Goltsman E."/>
            <person name="Thiel J."/>
            <person name="Malfatti S."/>
            <person name="Loper J.E."/>
            <person name="Lapidus A."/>
            <person name="Detter J.C."/>
            <person name="Land M."/>
            <person name="Richardson P.M."/>
            <person name="Kyrpides N.C."/>
            <person name="Ivanova N."/>
            <person name="Lindow S.E."/>
        </authorList>
    </citation>
    <scope>NUCLEOTIDE SEQUENCE [LARGE SCALE GENOMIC DNA]</scope>
    <source>
        <strain>B728a</strain>
    </source>
</reference>
<accession>Q4ZTW1</accession>
<sequence length="507" mass="55495">MQQAIEQYATGGALRFNGIGKVFPGVKALSDISFEARPGSVHALMGENGAGKSTLLKILGGSYQPNSGTLQIGEQSYQFKSTAESIAAGVAVIHQELHLVPEMTVAENLLLGHMPNRFGLINRGAMYRRAGELLKGLADEIDPHTRLGDLSLGQRQLVEIAKAMSRNAHVIAFDEPTSSLSAREIDRLMAIIVRLRDEGRVILYVSHRMEEIFRVCDAVTVFKDGRFVKTFEQMADLDHDRLVTCMVGRDIQNIYNYRPRQHQGPSLRVTGLLGPGLHEPVTFAVQKGEVLGFFGLVGAGRTELFRLLSGLTRSSAGTLQLDGKPLTLKSPRDAIEAGILLCPEDRKKEGIVPLSSVAENINIGARPRHVNLGCLIQGRWERDNARSQIKSMNVKTPSPEQQIMFLSGGNQQKAILGRWLSMPMKVLLLDEPTRGIDVGAKSEIYEIIHNLAADGIAVIVVSSDLMEVMGISDRILVMSEGAITGELNRDEADESRLLQLALPRTRG</sequence>
<dbReference type="EC" id="7.5.2.12" evidence="1"/>
<dbReference type="EMBL" id="CP000075">
    <property type="protein sequence ID" value="AAY37411.1"/>
    <property type="molecule type" value="Genomic_DNA"/>
</dbReference>
<dbReference type="RefSeq" id="WP_011267630.1">
    <property type="nucleotide sequence ID" value="NC_007005.1"/>
</dbReference>
<dbReference type="RefSeq" id="YP_235449.1">
    <property type="nucleotide sequence ID" value="NC_007005.1"/>
</dbReference>
<dbReference type="SMR" id="Q4ZTW1"/>
<dbReference type="STRING" id="205918.Psyr_2372"/>
<dbReference type="KEGG" id="psb:Psyr_2372"/>
<dbReference type="PATRIC" id="fig|205918.7.peg.2428"/>
<dbReference type="eggNOG" id="COG1129">
    <property type="taxonomic scope" value="Bacteria"/>
</dbReference>
<dbReference type="HOGENOM" id="CLU_000604_92_3_6"/>
<dbReference type="OrthoDB" id="9776369at2"/>
<dbReference type="Proteomes" id="UP000000426">
    <property type="component" value="Chromosome"/>
</dbReference>
<dbReference type="GO" id="GO:0005886">
    <property type="term" value="C:plasma membrane"/>
    <property type="evidence" value="ECO:0007669"/>
    <property type="project" value="UniProtKB-SubCell"/>
</dbReference>
<dbReference type="GO" id="GO:0015612">
    <property type="term" value="F:ABC-type L-arabinose transporter activity"/>
    <property type="evidence" value="ECO:0007669"/>
    <property type="project" value="UniProtKB-EC"/>
</dbReference>
<dbReference type="GO" id="GO:0005524">
    <property type="term" value="F:ATP binding"/>
    <property type="evidence" value="ECO:0007669"/>
    <property type="project" value="UniProtKB-KW"/>
</dbReference>
<dbReference type="GO" id="GO:0016887">
    <property type="term" value="F:ATP hydrolysis activity"/>
    <property type="evidence" value="ECO:0007669"/>
    <property type="project" value="InterPro"/>
</dbReference>
<dbReference type="CDD" id="cd03216">
    <property type="entry name" value="ABC_Carb_Monos_I"/>
    <property type="match status" value="1"/>
</dbReference>
<dbReference type="CDD" id="cd03215">
    <property type="entry name" value="ABC_Carb_Monos_II"/>
    <property type="match status" value="1"/>
</dbReference>
<dbReference type="FunFam" id="3.40.50.300:FF:000126">
    <property type="entry name" value="Galactose/methyl galactoside import ATP-binding protein MglA"/>
    <property type="match status" value="1"/>
</dbReference>
<dbReference type="FunFam" id="3.40.50.300:FF:000127">
    <property type="entry name" value="Ribose import ATP-binding protein RbsA"/>
    <property type="match status" value="1"/>
</dbReference>
<dbReference type="Gene3D" id="3.40.50.300">
    <property type="entry name" value="P-loop containing nucleotide triphosphate hydrolases"/>
    <property type="match status" value="2"/>
</dbReference>
<dbReference type="InterPro" id="IPR003593">
    <property type="entry name" value="AAA+_ATPase"/>
</dbReference>
<dbReference type="InterPro" id="IPR050107">
    <property type="entry name" value="ABC_carbohydrate_import_ATPase"/>
</dbReference>
<dbReference type="InterPro" id="IPR003439">
    <property type="entry name" value="ABC_transporter-like_ATP-bd"/>
</dbReference>
<dbReference type="InterPro" id="IPR017871">
    <property type="entry name" value="ABC_transporter-like_CS"/>
</dbReference>
<dbReference type="InterPro" id="IPR027417">
    <property type="entry name" value="P-loop_NTPase"/>
</dbReference>
<dbReference type="NCBIfam" id="NF008442">
    <property type="entry name" value="PRK11288.1"/>
    <property type="match status" value="1"/>
</dbReference>
<dbReference type="PANTHER" id="PTHR43790:SF6">
    <property type="entry name" value="ARABINOSE IMPORT ATP-BINDING PROTEIN ARAG"/>
    <property type="match status" value="1"/>
</dbReference>
<dbReference type="PANTHER" id="PTHR43790">
    <property type="entry name" value="CARBOHYDRATE TRANSPORT ATP-BINDING PROTEIN MG119-RELATED"/>
    <property type="match status" value="1"/>
</dbReference>
<dbReference type="Pfam" id="PF00005">
    <property type="entry name" value="ABC_tran"/>
    <property type="match status" value="2"/>
</dbReference>
<dbReference type="SMART" id="SM00382">
    <property type="entry name" value="AAA"/>
    <property type="match status" value="2"/>
</dbReference>
<dbReference type="SUPFAM" id="SSF52540">
    <property type="entry name" value="P-loop containing nucleoside triphosphate hydrolases"/>
    <property type="match status" value="2"/>
</dbReference>
<dbReference type="PROSITE" id="PS00211">
    <property type="entry name" value="ABC_TRANSPORTER_1"/>
    <property type="match status" value="2"/>
</dbReference>
<dbReference type="PROSITE" id="PS50893">
    <property type="entry name" value="ABC_TRANSPORTER_2"/>
    <property type="match status" value="2"/>
</dbReference>
<dbReference type="PROSITE" id="PS51268">
    <property type="entry name" value="ARAG"/>
    <property type="match status" value="1"/>
</dbReference>
<name>ARAG_PSEU2</name>
<protein>
    <recommendedName>
        <fullName evidence="1">Arabinose import ATP-binding protein AraG</fullName>
        <ecNumber evidence="1">7.5.2.12</ecNumber>
    </recommendedName>
</protein>
<proteinExistence type="inferred from homology"/>